<organism>
    <name type="scientific">Methanosphaera stadtmanae (strain ATCC 43021 / DSM 3091 / JCM 11832 / MCB-3)</name>
    <dbReference type="NCBI Taxonomy" id="339860"/>
    <lineage>
        <taxon>Archaea</taxon>
        <taxon>Methanobacteriati</taxon>
        <taxon>Methanobacteriota</taxon>
        <taxon>Methanomada group</taxon>
        <taxon>Methanobacteria</taxon>
        <taxon>Methanobacteriales</taxon>
        <taxon>Methanobacteriaceae</taxon>
        <taxon>Methanosphaera</taxon>
    </lineage>
</organism>
<gene>
    <name evidence="1" type="primary">rpl21e</name>
    <name type="ordered locus">Msp_1542</name>
</gene>
<sequence length="96" mass="11033">MRKSKGFKSRSRYKLKRSIRPKRANPISRKIQVFEVGNKVHIIVDSSIHRGQPHPRFHGKTGEVVGQKGKAYLVAIKDGNKAKELIIRPEHLKLQE</sequence>
<name>RL21_METST</name>
<dbReference type="EMBL" id="CP000102">
    <property type="protein sequence ID" value="ABC57909.1"/>
    <property type="molecule type" value="Genomic_DNA"/>
</dbReference>
<dbReference type="RefSeq" id="WP_011407108.1">
    <property type="nucleotide sequence ID" value="NC_007681.1"/>
</dbReference>
<dbReference type="SMR" id="Q2NE44"/>
<dbReference type="STRING" id="339860.Msp_1542"/>
<dbReference type="KEGG" id="mst:Msp_1542"/>
<dbReference type="eggNOG" id="arCOG04129">
    <property type="taxonomic scope" value="Archaea"/>
</dbReference>
<dbReference type="HOGENOM" id="CLU_103610_1_1_2"/>
<dbReference type="OrthoDB" id="6295at2157"/>
<dbReference type="Proteomes" id="UP000001931">
    <property type="component" value="Chromosome"/>
</dbReference>
<dbReference type="GO" id="GO:1990904">
    <property type="term" value="C:ribonucleoprotein complex"/>
    <property type="evidence" value="ECO:0007669"/>
    <property type="project" value="UniProtKB-KW"/>
</dbReference>
<dbReference type="GO" id="GO:0005840">
    <property type="term" value="C:ribosome"/>
    <property type="evidence" value="ECO:0007669"/>
    <property type="project" value="UniProtKB-KW"/>
</dbReference>
<dbReference type="GO" id="GO:0003735">
    <property type="term" value="F:structural constituent of ribosome"/>
    <property type="evidence" value="ECO:0007669"/>
    <property type="project" value="InterPro"/>
</dbReference>
<dbReference type="GO" id="GO:0006412">
    <property type="term" value="P:translation"/>
    <property type="evidence" value="ECO:0007669"/>
    <property type="project" value="UniProtKB-UniRule"/>
</dbReference>
<dbReference type="FunFam" id="2.30.30.70:FF:000001">
    <property type="entry name" value="60S ribosomal protein L21"/>
    <property type="match status" value="1"/>
</dbReference>
<dbReference type="Gene3D" id="2.30.30.70">
    <property type="entry name" value="Ribosomal protein L21"/>
    <property type="match status" value="1"/>
</dbReference>
<dbReference type="HAMAP" id="MF_00369">
    <property type="entry name" value="Ribosomal_eL21"/>
    <property type="match status" value="1"/>
</dbReference>
<dbReference type="InterPro" id="IPR001147">
    <property type="entry name" value="Ribosomal_eL21"/>
</dbReference>
<dbReference type="InterPro" id="IPR022856">
    <property type="entry name" value="Ribosomal_eL21_arc"/>
</dbReference>
<dbReference type="InterPro" id="IPR036948">
    <property type="entry name" value="Ribosomal_eL21_sf"/>
</dbReference>
<dbReference type="InterPro" id="IPR008991">
    <property type="entry name" value="Translation_prot_SH3-like_sf"/>
</dbReference>
<dbReference type="NCBIfam" id="NF003303">
    <property type="entry name" value="PRK04306.1"/>
    <property type="match status" value="1"/>
</dbReference>
<dbReference type="PANTHER" id="PTHR20981">
    <property type="entry name" value="60S RIBOSOMAL PROTEIN L21"/>
    <property type="match status" value="1"/>
</dbReference>
<dbReference type="Pfam" id="PF01157">
    <property type="entry name" value="Ribosomal_L21e"/>
    <property type="match status" value="1"/>
</dbReference>
<dbReference type="SUPFAM" id="SSF50104">
    <property type="entry name" value="Translation proteins SH3-like domain"/>
    <property type="match status" value="1"/>
</dbReference>
<proteinExistence type="inferred from homology"/>
<accession>Q2NE44</accession>
<comment type="similarity">
    <text evidence="1">Belongs to the eukaryotic ribosomal protein eL21 family.</text>
</comment>
<keyword id="KW-1185">Reference proteome</keyword>
<keyword id="KW-0687">Ribonucleoprotein</keyword>
<keyword id="KW-0689">Ribosomal protein</keyword>
<protein>
    <recommendedName>
        <fullName evidence="1">Large ribosomal subunit protein eL21</fullName>
    </recommendedName>
    <alternativeName>
        <fullName evidence="3">50S ribosomal protein L21e</fullName>
    </alternativeName>
</protein>
<reference key="1">
    <citation type="journal article" date="2006" name="J. Bacteriol.">
        <title>The genome sequence of Methanosphaera stadtmanae reveals why this human intestinal archaeon is restricted to methanol and H2 for methane formation and ATP synthesis.</title>
        <authorList>
            <person name="Fricke W.F."/>
            <person name="Seedorf H."/>
            <person name="Henne A."/>
            <person name="Kruer M."/>
            <person name="Liesegang H."/>
            <person name="Hedderich R."/>
            <person name="Gottschalk G."/>
            <person name="Thauer R.K."/>
        </authorList>
    </citation>
    <scope>NUCLEOTIDE SEQUENCE [LARGE SCALE GENOMIC DNA]</scope>
    <source>
        <strain>ATCC 43021 / DSM 3091 / JCM 11832 / MCB-3</strain>
    </source>
</reference>
<feature type="chain" id="PRO_0000243371" description="Large ribosomal subunit protein eL21">
    <location>
        <begin position="1"/>
        <end position="96"/>
    </location>
</feature>
<feature type="region of interest" description="Disordered" evidence="2">
    <location>
        <begin position="1"/>
        <end position="22"/>
    </location>
</feature>
<evidence type="ECO:0000255" key="1">
    <source>
        <dbReference type="HAMAP-Rule" id="MF_00369"/>
    </source>
</evidence>
<evidence type="ECO:0000256" key="2">
    <source>
        <dbReference type="SAM" id="MobiDB-lite"/>
    </source>
</evidence>
<evidence type="ECO:0000305" key="3"/>